<protein>
    <recommendedName>
        <fullName>Protein FMP52, mitochondrial</fullName>
    </recommendedName>
</protein>
<name>FMP52_KLULA</name>
<evidence type="ECO:0000250" key="1"/>
<evidence type="ECO:0000305" key="2"/>
<organism>
    <name type="scientific">Kluyveromyces lactis (strain ATCC 8585 / CBS 2359 / DSM 70799 / NBRC 1267 / NRRL Y-1140 / WM37)</name>
    <name type="common">Yeast</name>
    <name type="synonym">Candida sphaerica</name>
    <dbReference type="NCBI Taxonomy" id="284590"/>
    <lineage>
        <taxon>Eukaryota</taxon>
        <taxon>Fungi</taxon>
        <taxon>Dikarya</taxon>
        <taxon>Ascomycota</taxon>
        <taxon>Saccharomycotina</taxon>
        <taxon>Saccharomycetes</taxon>
        <taxon>Saccharomycetales</taxon>
        <taxon>Saccharomycetaceae</taxon>
        <taxon>Kluyveromyces</taxon>
    </lineage>
</organism>
<accession>Q6CQW6</accession>
<dbReference type="EMBL" id="CR382124">
    <property type="protein sequence ID" value="CAH00769.1"/>
    <property type="molecule type" value="Genomic_DNA"/>
</dbReference>
<dbReference type="RefSeq" id="XP_453673.1">
    <property type="nucleotide sequence ID" value="XM_453673.1"/>
</dbReference>
<dbReference type="SMR" id="Q6CQW6"/>
<dbReference type="FunCoup" id="Q6CQW6">
    <property type="interactions" value="108"/>
</dbReference>
<dbReference type="STRING" id="284590.Q6CQW6"/>
<dbReference type="PaxDb" id="284590-Q6CQW6"/>
<dbReference type="KEGG" id="kla:KLLA0_D13684g"/>
<dbReference type="eggNOG" id="KOG4039">
    <property type="taxonomic scope" value="Eukaryota"/>
</dbReference>
<dbReference type="HOGENOM" id="CLU_071330_2_2_1"/>
<dbReference type="InParanoid" id="Q6CQW6"/>
<dbReference type="OMA" id="CIENAKA"/>
<dbReference type="Proteomes" id="UP000000598">
    <property type="component" value="Chromosome D"/>
</dbReference>
<dbReference type="GO" id="GO:0005741">
    <property type="term" value="C:mitochondrial outer membrane"/>
    <property type="evidence" value="ECO:0007669"/>
    <property type="project" value="UniProtKB-SubCell"/>
</dbReference>
<dbReference type="GO" id="GO:0051170">
    <property type="term" value="P:import into nucleus"/>
    <property type="evidence" value="ECO:0007669"/>
    <property type="project" value="TreeGrafter"/>
</dbReference>
<dbReference type="FunFam" id="3.40.50.720:FF:000366">
    <property type="entry name" value="Protein FMP52, mitochondrial"/>
    <property type="match status" value="1"/>
</dbReference>
<dbReference type="Gene3D" id="3.40.50.720">
    <property type="entry name" value="NAD(P)-binding Rossmann-like Domain"/>
    <property type="match status" value="1"/>
</dbReference>
<dbReference type="InterPro" id="IPR016040">
    <property type="entry name" value="NAD(P)-bd_dom"/>
</dbReference>
<dbReference type="InterPro" id="IPR036291">
    <property type="entry name" value="NAD(P)-bd_dom_sf"/>
</dbReference>
<dbReference type="PANTHER" id="PTHR14097">
    <property type="entry name" value="OXIDOREDUCTASE HTATIP2"/>
    <property type="match status" value="1"/>
</dbReference>
<dbReference type="PANTHER" id="PTHR14097:SF7">
    <property type="entry name" value="OXIDOREDUCTASE HTATIP2"/>
    <property type="match status" value="1"/>
</dbReference>
<dbReference type="Pfam" id="PF13460">
    <property type="entry name" value="NAD_binding_10"/>
    <property type="match status" value="1"/>
</dbReference>
<dbReference type="SUPFAM" id="SSF51735">
    <property type="entry name" value="NAD(P)-binding Rossmann-fold domains"/>
    <property type="match status" value="1"/>
</dbReference>
<reference key="1">
    <citation type="journal article" date="2004" name="Nature">
        <title>Genome evolution in yeasts.</title>
        <authorList>
            <person name="Dujon B."/>
            <person name="Sherman D."/>
            <person name="Fischer G."/>
            <person name="Durrens P."/>
            <person name="Casaregola S."/>
            <person name="Lafontaine I."/>
            <person name="de Montigny J."/>
            <person name="Marck C."/>
            <person name="Neuveglise C."/>
            <person name="Talla E."/>
            <person name="Goffard N."/>
            <person name="Frangeul L."/>
            <person name="Aigle M."/>
            <person name="Anthouard V."/>
            <person name="Babour A."/>
            <person name="Barbe V."/>
            <person name="Barnay S."/>
            <person name="Blanchin S."/>
            <person name="Beckerich J.-M."/>
            <person name="Beyne E."/>
            <person name="Bleykasten C."/>
            <person name="Boisrame A."/>
            <person name="Boyer J."/>
            <person name="Cattolico L."/>
            <person name="Confanioleri F."/>
            <person name="de Daruvar A."/>
            <person name="Despons L."/>
            <person name="Fabre E."/>
            <person name="Fairhead C."/>
            <person name="Ferry-Dumazet H."/>
            <person name="Groppi A."/>
            <person name="Hantraye F."/>
            <person name="Hennequin C."/>
            <person name="Jauniaux N."/>
            <person name="Joyet P."/>
            <person name="Kachouri R."/>
            <person name="Kerrest A."/>
            <person name="Koszul R."/>
            <person name="Lemaire M."/>
            <person name="Lesur I."/>
            <person name="Ma L."/>
            <person name="Muller H."/>
            <person name="Nicaud J.-M."/>
            <person name="Nikolski M."/>
            <person name="Oztas S."/>
            <person name="Ozier-Kalogeropoulos O."/>
            <person name="Pellenz S."/>
            <person name="Potier S."/>
            <person name="Richard G.-F."/>
            <person name="Straub M.-L."/>
            <person name="Suleau A."/>
            <person name="Swennen D."/>
            <person name="Tekaia F."/>
            <person name="Wesolowski-Louvel M."/>
            <person name="Westhof E."/>
            <person name="Wirth B."/>
            <person name="Zeniou-Meyer M."/>
            <person name="Zivanovic Y."/>
            <person name="Bolotin-Fukuhara M."/>
            <person name="Thierry A."/>
            <person name="Bouchier C."/>
            <person name="Caudron B."/>
            <person name="Scarpelli C."/>
            <person name="Gaillardin C."/>
            <person name="Weissenbach J."/>
            <person name="Wincker P."/>
            <person name="Souciet J.-L."/>
        </authorList>
    </citation>
    <scope>NUCLEOTIDE SEQUENCE [LARGE SCALE GENOMIC DNA]</scope>
    <source>
        <strain>ATCC 8585 / CBS 2359 / DSM 70799 / NBRC 1267 / NRRL Y-1140 / WM37</strain>
    </source>
</reference>
<keyword id="KW-0472">Membrane</keyword>
<keyword id="KW-0496">Mitochondrion</keyword>
<keyword id="KW-1000">Mitochondrion outer membrane</keyword>
<keyword id="KW-1185">Reference proteome</keyword>
<keyword id="KW-0809">Transit peptide</keyword>
<gene>
    <name type="primary">FMP52</name>
    <name type="ordered locus">KLLA0D13684g</name>
</gene>
<comment type="subcellular location">
    <subcellularLocation>
        <location evidence="1">Mitochondrion outer membrane</location>
        <topology evidence="1">Peripheral membrane protein</topology>
    </subcellularLocation>
</comment>
<comment type="similarity">
    <text evidence="2">Belongs to the FMP52 family.</text>
</comment>
<sequence>MNALVLGATGLCGSSFLKYASQNSGFDKVYAITRRDLPSELKTDSVVSVVSSETNKWGELIPEDATVLLTGLATTRAAAGGFENQYKIDHDMNVELAKVAKAKGYKVCVLVSSLGANENSFLPYLKLKGETERDIIALDFDKTIILRPGGLLGERNGTFKGFGDKYFSKISSCFYRSKLQSALGYPIYGDEVGKVGVKLALDSSRTEKVQIVSSPELLKLAEEK</sequence>
<feature type="transit peptide" description="Mitochondrion">
    <location>
        <begin position="1"/>
        <end status="unknown"/>
    </location>
</feature>
<feature type="chain" id="PRO_0000301823" description="Protein FMP52, mitochondrial">
    <location>
        <begin status="unknown"/>
        <end position="224"/>
    </location>
</feature>
<proteinExistence type="inferred from homology"/>